<proteinExistence type="evidence at protein level"/>
<accession>Q99J45</accession>
<accession>Q8BL77</accession>
<organism>
    <name type="scientific">Mus musculus</name>
    <name type="common">Mouse</name>
    <dbReference type="NCBI Taxonomy" id="10090"/>
    <lineage>
        <taxon>Eukaryota</taxon>
        <taxon>Metazoa</taxon>
        <taxon>Chordata</taxon>
        <taxon>Craniata</taxon>
        <taxon>Vertebrata</taxon>
        <taxon>Euteleostomi</taxon>
        <taxon>Mammalia</taxon>
        <taxon>Eutheria</taxon>
        <taxon>Euarchontoglires</taxon>
        <taxon>Glires</taxon>
        <taxon>Rodentia</taxon>
        <taxon>Myomorpha</taxon>
        <taxon>Muroidea</taxon>
        <taxon>Muridae</taxon>
        <taxon>Murinae</taxon>
        <taxon>Mus</taxon>
        <taxon>Mus</taxon>
    </lineage>
</organism>
<sequence length="535" mass="59866">MSEGESQTVVSSGSDPKVESSSLAPGLTSVSPPVTSTTSAASPEEEEESEDESEILEESPCGRWQKRREEVNQRNVPGIDSAYLAMDTEEGVEVVWNEVQFSERKNYKLQEEKVRAVFDNLIQLEHLNIVKFHKYWADVKENKARVIFITEYMSSGSLKQFLKKTKKNHKTMNEKAWKRWCTQILSALSYLHSCDPPIIHGNLTCDTIFIQHNGLIKIGSVAPDTINNHVKTCREEQKNLHFFAPEYGEVTNVTTAVDIYSFGMCALEMAVLEIQGNGESSYVPQEAISSAIQLLEDSLQREFIQKCLQSEPARRPTARELLFHPALFEVPSLKLLAAHCIVGHQHMIPENALEEITKNMDTSAVLAEIPAGPGREPVQTLYSQSPALELDKFLEDVRNGIYPLTAFGLPRPQQPQQEEVTSPVVPPSVKTPTPEPAEVETRKVVLMQCNIESVEEGVKHHLTLLLKLEDKLNRHLSCDLMPNESIPDLAAELVQLGFISEADQSRLTSLLEETLNKFNFTRNSTLNTATVTVSS</sequence>
<gene>
    <name type="primary">Nrbp1</name>
    <name type="synonym">Madm</name>
    <name type="synonym">Nrbp</name>
</gene>
<feature type="initiator methionine" description="Removed" evidence="1">
    <location>
        <position position="1"/>
    </location>
</feature>
<feature type="chain" id="PRO_0000086451" description="Nuclear receptor-binding protein">
    <location>
        <begin position="2"/>
        <end position="535"/>
    </location>
</feature>
<feature type="domain" description="Protein kinase" evidence="2">
    <location>
        <begin position="68"/>
        <end position="327"/>
    </location>
</feature>
<feature type="region of interest" description="Disordered" evidence="3">
    <location>
        <begin position="1"/>
        <end position="70"/>
    </location>
</feature>
<feature type="region of interest" description="Disordered" evidence="3">
    <location>
        <begin position="409"/>
        <end position="437"/>
    </location>
</feature>
<feature type="compositionally biased region" description="Polar residues" evidence="3">
    <location>
        <begin position="1"/>
        <end position="23"/>
    </location>
</feature>
<feature type="compositionally biased region" description="Low complexity" evidence="3">
    <location>
        <begin position="27"/>
        <end position="42"/>
    </location>
</feature>
<feature type="compositionally biased region" description="Acidic residues" evidence="3">
    <location>
        <begin position="43"/>
        <end position="57"/>
    </location>
</feature>
<feature type="compositionally biased region" description="Low complexity" evidence="3">
    <location>
        <begin position="414"/>
        <end position="432"/>
    </location>
</feature>
<feature type="modified residue" description="N-acetylserine" evidence="1">
    <location>
        <position position="2"/>
    </location>
</feature>
<feature type="modified residue" description="Phosphoserine" evidence="1">
    <location>
        <position position="2"/>
    </location>
</feature>
<feature type="modified residue" description="Phosphothreonine" evidence="11">
    <location>
        <position position="431"/>
    </location>
</feature>
<feature type="modified residue" description="Phosphothreonine" evidence="11">
    <location>
        <position position="433"/>
    </location>
</feature>
<feature type="sequence conflict" description="In Ref. 2; BAC32612." evidence="6" ref="2">
    <original>S</original>
    <variation>SVFHRIFAN</variation>
    <location>
        <position position="220"/>
    </location>
</feature>
<feature type="sequence conflict" description="In Ref. 2; BAC32612." evidence="6" ref="2">
    <original>V</original>
    <variation>G</variation>
    <location>
        <position position="494"/>
    </location>
</feature>
<feature type="sequence conflict" description="In Ref. 2; BAC32612." evidence="6" ref="2">
    <original>TSL</original>
    <variation>SSV</variation>
    <location>
        <begin position="508"/>
        <end position="510"/>
    </location>
</feature>
<feature type="sequence conflict" description="In Ref. 2; BAC32612." evidence="6" ref="2">
    <original>T</original>
    <variation>S</variation>
    <location>
        <position position="521"/>
    </location>
</feature>
<feature type="sequence conflict" description="In Ref. 2; BAC32612." evidence="6" ref="2">
    <original>S</original>
    <variation>VVELT</variation>
    <location>
        <position position="535"/>
    </location>
</feature>
<dbReference type="EMBL" id="AF302138">
    <property type="protein sequence ID" value="AAK97260.1"/>
    <property type="molecule type" value="mRNA"/>
</dbReference>
<dbReference type="EMBL" id="AF302139">
    <property type="protein sequence ID" value="AAK97261.1"/>
    <property type="molecule type" value="Genomic_DNA"/>
</dbReference>
<dbReference type="EMBL" id="AK046142">
    <property type="protein sequence ID" value="BAC32612.1"/>
    <property type="molecule type" value="mRNA"/>
</dbReference>
<dbReference type="EMBL" id="BC004756">
    <property type="protein sequence ID" value="AAH04756.1"/>
    <property type="molecule type" value="mRNA"/>
</dbReference>
<dbReference type="EMBL" id="BC018463">
    <property type="protein sequence ID" value="AAH18463.1"/>
    <property type="molecule type" value="mRNA"/>
</dbReference>
<dbReference type="CCDS" id="CCDS19180.1"/>
<dbReference type="RefSeq" id="NP_671734.1">
    <property type="nucleotide sequence ID" value="NM_147201.2"/>
</dbReference>
<dbReference type="SMR" id="Q99J45"/>
<dbReference type="BioGRID" id="228688">
    <property type="interactions" value="8"/>
</dbReference>
<dbReference type="FunCoup" id="Q99J45">
    <property type="interactions" value="4682"/>
</dbReference>
<dbReference type="IntAct" id="Q99J45">
    <property type="interactions" value="3"/>
</dbReference>
<dbReference type="MINT" id="Q99J45"/>
<dbReference type="STRING" id="10090.ENSMUSP00000143872"/>
<dbReference type="GlyGen" id="Q99J45">
    <property type="glycosylation" value="3 sites, 1 O-linked glycan (3 sites)"/>
</dbReference>
<dbReference type="iPTMnet" id="Q99J45"/>
<dbReference type="PhosphoSitePlus" id="Q99J45"/>
<dbReference type="jPOST" id="Q99J45"/>
<dbReference type="PaxDb" id="10090-ENSMUSP00000031034"/>
<dbReference type="ProteomicsDB" id="253012"/>
<dbReference type="Pumba" id="Q99J45"/>
<dbReference type="Antibodypedia" id="28488">
    <property type="antibodies" value="413 antibodies from 29 providers"/>
</dbReference>
<dbReference type="DNASU" id="192292"/>
<dbReference type="Ensembl" id="ENSMUST00000031034.12">
    <property type="protein sequence ID" value="ENSMUSP00000031034.6"/>
    <property type="gene ID" value="ENSMUSG00000029148.16"/>
</dbReference>
<dbReference type="GeneID" id="192292"/>
<dbReference type="KEGG" id="mmu:192292"/>
<dbReference type="UCSC" id="uc008wxt.1">
    <property type="organism name" value="mouse"/>
</dbReference>
<dbReference type="AGR" id="MGI:2183436"/>
<dbReference type="CTD" id="29959"/>
<dbReference type="MGI" id="MGI:2183436">
    <property type="gene designation" value="Nrbp1"/>
</dbReference>
<dbReference type="VEuPathDB" id="HostDB:ENSMUSG00000029148"/>
<dbReference type="eggNOG" id="KOG1266">
    <property type="taxonomic scope" value="Eukaryota"/>
</dbReference>
<dbReference type="GeneTree" id="ENSGT00940000155605"/>
<dbReference type="HOGENOM" id="CLU_024273_0_0_1"/>
<dbReference type="InParanoid" id="Q99J45"/>
<dbReference type="OrthoDB" id="1034557at2759"/>
<dbReference type="PhylomeDB" id="Q99J45"/>
<dbReference type="TreeFam" id="TF315519"/>
<dbReference type="BioGRID-ORCS" id="192292">
    <property type="hits" value="18 hits in 82 CRISPR screens"/>
</dbReference>
<dbReference type="ChiTaRS" id="Nrbp1">
    <property type="organism name" value="mouse"/>
</dbReference>
<dbReference type="PRO" id="PR:Q99J45"/>
<dbReference type="Proteomes" id="UP000000589">
    <property type="component" value="Chromosome 5"/>
</dbReference>
<dbReference type="RNAct" id="Q99J45">
    <property type="molecule type" value="protein"/>
</dbReference>
<dbReference type="Bgee" id="ENSMUSG00000029148">
    <property type="expression patterns" value="Expressed in embryonic post-anal tail and 271 other cell types or tissues"/>
</dbReference>
<dbReference type="ExpressionAtlas" id="Q99J45">
    <property type="expression patterns" value="baseline and differential"/>
</dbReference>
<dbReference type="GO" id="GO:0005938">
    <property type="term" value="C:cell cortex"/>
    <property type="evidence" value="ECO:0007669"/>
    <property type="project" value="UniProtKB-SubCell"/>
</dbReference>
<dbReference type="GO" id="GO:0012505">
    <property type="term" value="C:endomembrane system"/>
    <property type="evidence" value="ECO:0000266"/>
    <property type="project" value="MGI"/>
</dbReference>
<dbReference type="GO" id="GO:0030027">
    <property type="term" value="C:lamellipodium"/>
    <property type="evidence" value="ECO:0007669"/>
    <property type="project" value="UniProtKB-SubCell"/>
</dbReference>
<dbReference type="GO" id="GO:0016020">
    <property type="term" value="C:membrane"/>
    <property type="evidence" value="ECO:0007669"/>
    <property type="project" value="UniProtKB-KW"/>
</dbReference>
<dbReference type="GO" id="GO:0048471">
    <property type="term" value="C:perinuclear region of cytoplasm"/>
    <property type="evidence" value="ECO:0000314"/>
    <property type="project" value="UniProtKB"/>
</dbReference>
<dbReference type="GO" id="GO:0042802">
    <property type="term" value="F:identical protein binding"/>
    <property type="evidence" value="ECO:0000353"/>
    <property type="project" value="IntAct"/>
</dbReference>
<dbReference type="GO" id="GO:0042803">
    <property type="term" value="F:protein homodimerization activity"/>
    <property type="evidence" value="ECO:0000314"/>
    <property type="project" value="UniProtKB"/>
</dbReference>
<dbReference type="GO" id="GO:0004674">
    <property type="term" value="F:protein serine/threonine kinase activity"/>
    <property type="evidence" value="ECO:0000266"/>
    <property type="project" value="MGI"/>
</dbReference>
<dbReference type="GO" id="GO:0006888">
    <property type="term" value="P:endoplasmic reticulum to Golgi vesicle-mediated transport"/>
    <property type="evidence" value="ECO:0000250"/>
    <property type="project" value="UniProtKB"/>
</dbReference>
<dbReference type="GO" id="GO:0030855">
    <property type="term" value="P:epithelial cell differentiation"/>
    <property type="evidence" value="ECO:0000315"/>
    <property type="project" value="UniProtKB"/>
</dbReference>
<dbReference type="GO" id="GO:0050673">
    <property type="term" value="P:epithelial cell proliferation"/>
    <property type="evidence" value="ECO:0000315"/>
    <property type="project" value="UniProtKB"/>
</dbReference>
<dbReference type="GO" id="GO:0001701">
    <property type="term" value="P:in utero embryonic development"/>
    <property type="evidence" value="ECO:0000315"/>
    <property type="project" value="UniProtKB"/>
</dbReference>
<dbReference type="CDD" id="cd14034">
    <property type="entry name" value="PK_NRBP1"/>
    <property type="match status" value="1"/>
</dbReference>
<dbReference type="FunFam" id="1.10.510.10:FF:000181">
    <property type="entry name" value="Nuclear receptor-binding protein 1"/>
    <property type="match status" value="1"/>
</dbReference>
<dbReference type="FunFam" id="3.30.200.20:FF:000098">
    <property type="entry name" value="Nuclear receptor-binding protein 1"/>
    <property type="match status" value="1"/>
</dbReference>
<dbReference type="Gene3D" id="3.30.200.20">
    <property type="entry name" value="Phosphorylase Kinase, domain 1"/>
    <property type="match status" value="1"/>
</dbReference>
<dbReference type="Gene3D" id="1.10.510.10">
    <property type="entry name" value="Transferase(Phosphotransferase) domain 1"/>
    <property type="match status" value="1"/>
</dbReference>
<dbReference type="InterPro" id="IPR011009">
    <property type="entry name" value="Kinase-like_dom_sf"/>
</dbReference>
<dbReference type="InterPro" id="IPR000719">
    <property type="entry name" value="Prot_kinase_dom"/>
</dbReference>
<dbReference type="InterPro" id="IPR050588">
    <property type="entry name" value="WNK_Ser-Thr_kinase"/>
</dbReference>
<dbReference type="PANTHER" id="PTHR13902">
    <property type="entry name" value="SERINE/THREONINE-PROTEIN KINASE WNK WITH NO LYSINE -RELATED"/>
    <property type="match status" value="1"/>
</dbReference>
<dbReference type="Pfam" id="PF00069">
    <property type="entry name" value="Pkinase"/>
    <property type="match status" value="1"/>
</dbReference>
<dbReference type="SUPFAM" id="SSF56112">
    <property type="entry name" value="Protein kinase-like (PK-like)"/>
    <property type="match status" value="1"/>
</dbReference>
<dbReference type="PROSITE" id="PS50011">
    <property type="entry name" value="PROTEIN_KINASE_DOM"/>
    <property type="match status" value="1"/>
</dbReference>
<comment type="function">
    <text evidence="1 5">Required for embryonic development (PubMed:22510880). Plays a role in intestinal epithelial cell fate and proliferation, thereby involved in the architectural development of the intestine potentially via the regulation of Wnt-responsive genes (PubMed:22510880). May play a role in subcellular trafficking between the endoplasmic reticulum and Golgi apparatus through interactions with the Rho-type GTPases (By similarity).</text>
</comment>
<comment type="subunit">
    <text evidence="1 4 5">Homodimer (PubMed:12176995). Binds to MLF1, recruiting a serine kinase which phosphorylates both itself and MLF1 (PubMed:12176995). Phosphorylated MLF1 binds to YWHAZ and is retained in the cytoplasm (PubMed:12176995). Interacts with ELOC/TCEB1, ELOB/TCEB2, TSC22D2 and TSC22D4 (By similarity). Interacts with the Elongin BC E3 ubiquitin ligase complex via its interaction with ELOB/TCEB2 and ELOC/TCEB1 (By similarity). Interacts with SALL4 (PubMed:22510880).</text>
</comment>
<comment type="interaction">
    <interactant intactId="EBI-767484">
        <id>Q99J45</id>
    </interactant>
    <interactant intactId="EBI-354765">
        <id>Q9QWV4</id>
        <label>Mlf1</label>
    </interactant>
    <organismsDiffer>false</organismsDiffer>
    <experiments>5</experiments>
</comment>
<comment type="interaction">
    <interactant intactId="EBI-767484">
        <id>Q99J45</id>
    </interactant>
    <interactant intactId="EBI-767484">
        <id>Q99J45</id>
        <label>Nrbp1</label>
    </interactant>
    <organismsDiffer>false</organismsDiffer>
    <experiments>2</experiments>
</comment>
<comment type="subcellular location">
    <subcellularLocation>
        <location evidence="4">Cytoplasm</location>
        <location evidence="4">Cell cortex</location>
    </subcellularLocation>
    <subcellularLocation>
        <location evidence="4">Endomembrane system</location>
    </subcellularLocation>
    <subcellularLocation>
        <location evidence="4">Cell projection</location>
        <location evidence="4">Lamellipodium</location>
    </subcellularLocation>
    <text>Colocalizes with activated RAC3 to endomembranes and at the cell periphery in lamellipodia.</text>
</comment>
<comment type="tissue specificity">
    <text evidence="5">Expressed in Paneth, enteroendocrine and precursor goblet cell lineages in the intestine.</text>
</comment>
<comment type="domain">
    <text evidence="2">The protein kinase domain is predicted to be catalytically inactive.</text>
</comment>
<comment type="disruption phenotype">
    <text evidence="5">Embryonic lethality by 7.5 dpc.</text>
</comment>
<comment type="miscellaneous">
    <text evidence="5">May act as a tumor suppressor to decrease tumor incidence and improve survival.</text>
</comment>
<comment type="similarity">
    <text evidence="2">Belongs to the protein kinase superfamily. Ser/Thr protein kinase family.</text>
</comment>
<name>NRBP_MOUSE</name>
<protein>
    <recommendedName>
        <fullName>Nuclear receptor-binding protein</fullName>
    </recommendedName>
    <alternativeName>
        <fullName>HLS7-interacting protein kinase</fullName>
    </alternativeName>
    <alternativeName>
        <fullName>MLF1 adapter molecule</fullName>
    </alternativeName>
</protein>
<keyword id="KW-0007">Acetylation</keyword>
<keyword id="KW-0966">Cell projection</keyword>
<keyword id="KW-0963">Cytoplasm</keyword>
<keyword id="KW-0472">Membrane</keyword>
<keyword id="KW-0597">Phosphoprotein</keyword>
<keyword id="KW-1185">Reference proteome</keyword>
<reference evidence="6 9" key="1">
    <citation type="journal article" date="2002" name="J. Biol. Chem.">
        <title>MADM, a novel adaptor protein that mediates phosphorylation of the 14-3-3 binding site of myeloid leukemia factor 1.</title>
        <authorList>
            <person name="Lim R."/>
            <person name="Winteringham L.N."/>
            <person name="Williams J.H."/>
            <person name="McCulloch R.K."/>
            <person name="Ingley E."/>
            <person name="Tiao J.Y.-H."/>
            <person name="Lalonde J.-P."/>
            <person name="Tsai S."/>
            <person name="Tilbrook P.A."/>
            <person name="Sun Y."/>
            <person name="Wu X."/>
            <person name="Morris S.W."/>
            <person name="Klinken S.P."/>
        </authorList>
    </citation>
    <scope>NUCLEOTIDE SEQUENCE [GENOMIC DNA / MRNA]</scope>
    <scope>SUBCELLULAR LOCATION</scope>
    <scope>PHOSPHORYLATION</scope>
    <scope>HOMODIMERIZATION</scope>
    <scope>INTERACTION WITH MLF1</scope>
    <source>
        <strain evidence="10">129</strain>
        <strain evidence="9">BDF1</strain>
    </source>
</reference>
<reference key="2">
    <citation type="journal article" date="2005" name="Science">
        <title>The transcriptional landscape of the mammalian genome.</title>
        <authorList>
            <person name="Carninci P."/>
            <person name="Kasukawa T."/>
            <person name="Katayama S."/>
            <person name="Gough J."/>
            <person name="Frith M.C."/>
            <person name="Maeda N."/>
            <person name="Oyama R."/>
            <person name="Ravasi T."/>
            <person name="Lenhard B."/>
            <person name="Wells C."/>
            <person name="Kodzius R."/>
            <person name="Shimokawa K."/>
            <person name="Bajic V.B."/>
            <person name="Brenner S.E."/>
            <person name="Batalov S."/>
            <person name="Forrest A.R."/>
            <person name="Zavolan M."/>
            <person name="Davis M.J."/>
            <person name="Wilming L.G."/>
            <person name="Aidinis V."/>
            <person name="Allen J.E."/>
            <person name="Ambesi-Impiombato A."/>
            <person name="Apweiler R."/>
            <person name="Aturaliya R.N."/>
            <person name="Bailey T.L."/>
            <person name="Bansal M."/>
            <person name="Baxter L."/>
            <person name="Beisel K.W."/>
            <person name="Bersano T."/>
            <person name="Bono H."/>
            <person name="Chalk A.M."/>
            <person name="Chiu K.P."/>
            <person name="Choudhary V."/>
            <person name="Christoffels A."/>
            <person name="Clutterbuck D.R."/>
            <person name="Crowe M.L."/>
            <person name="Dalla E."/>
            <person name="Dalrymple B.P."/>
            <person name="de Bono B."/>
            <person name="Della Gatta G."/>
            <person name="di Bernardo D."/>
            <person name="Down T."/>
            <person name="Engstrom P."/>
            <person name="Fagiolini M."/>
            <person name="Faulkner G."/>
            <person name="Fletcher C.F."/>
            <person name="Fukushima T."/>
            <person name="Furuno M."/>
            <person name="Futaki S."/>
            <person name="Gariboldi M."/>
            <person name="Georgii-Hemming P."/>
            <person name="Gingeras T.R."/>
            <person name="Gojobori T."/>
            <person name="Green R.E."/>
            <person name="Gustincich S."/>
            <person name="Harbers M."/>
            <person name="Hayashi Y."/>
            <person name="Hensch T.K."/>
            <person name="Hirokawa N."/>
            <person name="Hill D."/>
            <person name="Huminiecki L."/>
            <person name="Iacono M."/>
            <person name="Ikeo K."/>
            <person name="Iwama A."/>
            <person name="Ishikawa T."/>
            <person name="Jakt M."/>
            <person name="Kanapin A."/>
            <person name="Katoh M."/>
            <person name="Kawasawa Y."/>
            <person name="Kelso J."/>
            <person name="Kitamura H."/>
            <person name="Kitano H."/>
            <person name="Kollias G."/>
            <person name="Krishnan S.P."/>
            <person name="Kruger A."/>
            <person name="Kummerfeld S.K."/>
            <person name="Kurochkin I.V."/>
            <person name="Lareau L.F."/>
            <person name="Lazarevic D."/>
            <person name="Lipovich L."/>
            <person name="Liu J."/>
            <person name="Liuni S."/>
            <person name="McWilliam S."/>
            <person name="Madan Babu M."/>
            <person name="Madera M."/>
            <person name="Marchionni L."/>
            <person name="Matsuda H."/>
            <person name="Matsuzawa S."/>
            <person name="Miki H."/>
            <person name="Mignone F."/>
            <person name="Miyake S."/>
            <person name="Morris K."/>
            <person name="Mottagui-Tabar S."/>
            <person name="Mulder N."/>
            <person name="Nakano N."/>
            <person name="Nakauchi H."/>
            <person name="Ng P."/>
            <person name="Nilsson R."/>
            <person name="Nishiguchi S."/>
            <person name="Nishikawa S."/>
            <person name="Nori F."/>
            <person name="Ohara O."/>
            <person name="Okazaki Y."/>
            <person name="Orlando V."/>
            <person name="Pang K.C."/>
            <person name="Pavan W.J."/>
            <person name="Pavesi G."/>
            <person name="Pesole G."/>
            <person name="Petrovsky N."/>
            <person name="Piazza S."/>
            <person name="Reed J."/>
            <person name="Reid J.F."/>
            <person name="Ring B.Z."/>
            <person name="Ringwald M."/>
            <person name="Rost B."/>
            <person name="Ruan Y."/>
            <person name="Salzberg S.L."/>
            <person name="Sandelin A."/>
            <person name="Schneider C."/>
            <person name="Schoenbach C."/>
            <person name="Sekiguchi K."/>
            <person name="Semple C.A."/>
            <person name="Seno S."/>
            <person name="Sessa L."/>
            <person name="Sheng Y."/>
            <person name="Shibata Y."/>
            <person name="Shimada H."/>
            <person name="Shimada K."/>
            <person name="Silva D."/>
            <person name="Sinclair B."/>
            <person name="Sperling S."/>
            <person name="Stupka E."/>
            <person name="Sugiura K."/>
            <person name="Sultana R."/>
            <person name="Takenaka Y."/>
            <person name="Taki K."/>
            <person name="Tammoja K."/>
            <person name="Tan S.L."/>
            <person name="Tang S."/>
            <person name="Taylor M.S."/>
            <person name="Tegner J."/>
            <person name="Teichmann S.A."/>
            <person name="Ueda H.R."/>
            <person name="van Nimwegen E."/>
            <person name="Verardo R."/>
            <person name="Wei C.L."/>
            <person name="Yagi K."/>
            <person name="Yamanishi H."/>
            <person name="Zabarovsky E."/>
            <person name="Zhu S."/>
            <person name="Zimmer A."/>
            <person name="Hide W."/>
            <person name="Bult C."/>
            <person name="Grimmond S.M."/>
            <person name="Teasdale R.D."/>
            <person name="Liu E.T."/>
            <person name="Brusic V."/>
            <person name="Quackenbush J."/>
            <person name="Wahlestedt C."/>
            <person name="Mattick J.S."/>
            <person name="Hume D.A."/>
            <person name="Kai C."/>
            <person name="Sasaki D."/>
            <person name="Tomaru Y."/>
            <person name="Fukuda S."/>
            <person name="Kanamori-Katayama M."/>
            <person name="Suzuki M."/>
            <person name="Aoki J."/>
            <person name="Arakawa T."/>
            <person name="Iida J."/>
            <person name="Imamura K."/>
            <person name="Itoh M."/>
            <person name="Kato T."/>
            <person name="Kawaji H."/>
            <person name="Kawagashira N."/>
            <person name="Kawashima T."/>
            <person name="Kojima M."/>
            <person name="Kondo S."/>
            <person name="Konno H."/>
            <person name="Nakano K."/>
            <person name="Ninomiya N."/>
            <person name="Nishio T."/>
            <person name="Okada M."/>
            <person name="Plessy C."/>
            <person name="Shibata K."/>
            <person name="Shiraki T."/>
            <person name="Suzuki S."/>
            <person name="Tagami M."/>
            <person name="Waki K."/>
            <person name="Watahiki A."/>
            <person name="Okamura-Oho Y."/>
            <person name="Suzuki H."/>
            <person name="Kawai J."/>
            <person name="Hayashizaki Y."/>
        </authorList>
    </citation>
    <scope>NUCLEOTIDE SEQUENCE [LARGE SCALE MRNA]</scope>
    <source>
        <strain>C57BL/6J</strain>
        <tissue>Corpora quadrigemina</tissue>
    </source>
</reference>
<reference evidence="7" key="3">
    <citation type="journal article" date="2004" name="Genome Res.">
        <title>The status, quality, and expansion of the NIH full-length cDNA project: the Mammalian Gene Collection (MGC).</title>
        <authorList>
            <consortium name="The MGC Project Team"/>
        </authorList>
    </citation>
    <scope>NUCLEOTIDE SEQUENCE [LARGE SCALE MRNA]</scope>
    <source>
        <strain evidence="7">129</strain>
        <strain evidence="8">FVB/N</strain>
        <tissue evidence="7">Mammary gland</tissue>
    </source>
</reference>
<reference key="4">
    <citation type="journal article" date="2004" name="Mol. Cell. Proteomics">
        <title>Phosphoproteomic analysis of the developing mouse brain.</title>
        <authorList>
            <person name="Ballif B.A."/>
            <person name="Villen J."/>
            <person name="Beausoleil S.A."/>
            <person name="Schwartz D."/>
            <person name="Gygi S.P."/>
        </authorList>
    </citation>
    <scope>IDENTIFICATION BY MASS SPECTROMETRY [LARGE SCALE ANALYSIS]</scope>
    <source>
        <tissue>Embryonic brain</tissue>
    </source>
</reference>
<reference key="5">
    <citation type="journal article" date="2007" name="Proc. Natl. Acad. Sci. U.S.A.">
        <title>Large-scale phosphorylation analysis of mouse liver.</title>
        <authorList>
            <person name="Villen J."/>
            <person name="Beausoleil S.A."/>
            <person name="Gerber S.A."/>
            <person name="Gygi S.P."/>
        </authorList>
    </citation>
    <scope>IDENTIFICATION BY MASS SPECTROMETRY [LARGE SCALE ANALYSIS]</scope>
    <source>
        <tissue>Liver</tissue>
    </source>
</reference>
<reference key="6">
    <citation type="journal article" date="2010" name="Cell">
        <title>A tissue-specific atlas of mouse protein phosphorylation and expression.</title>
        <authorList>
            <person name="Huttlin E.L."/>
            <person name="Jedrychowski M.P."/>
            <person name="Elias J.E."/>
            <person name="Goswami T."/>
            <person name="Rad R."/>
            <person name="Beausoleil S.A."/>
            <person name="Villen J."/>
            <person name="Haas W."/>
            <person name="Sowa M.E."/>
            <person name="Gygi S.P."/>
        </authorList>
    </citation>
    <scope>PHOSPHORYLATION [LARGE SCALE ANALYSIS] AT THR-431 AND THR-433</scope>
    <scope>IDENTIFICATION BY MASS SPECTROMETRY [LARGE SCALE ANALYSIS]</scope>
    <source>
        <tissue>Brain</tissue>
        <tissue>Brown adipose tissue</tissue>
        <tissue>Heart</tissue>
        <tissue>Kidney</tissue>
        <tissue>Liver</tissue>
        <tissue>Lung</tissue>
        <tissue>Pancreas</tissue>
        <tissue>Spleen</tissue>
        <tissue>Testis</tissue>
    </source>
</reference>
<reference key="7">
    <citation type="journal article" date="2012" name="EMBO J.">
        <title>Nuclear receptor binding protein 1 regulates intestinal progenitor cell homeostasis and tumour formation.</title>
        <authorList>
            <person name="Wilson C.H."/>
            <person name="Crombie C."/>
            <person name="van der Weyden L."/>
            <person name="Poulogiannis G."/>
            <person name="Rust A.G."/>
            <person name="Pardo M."/>
            <person name="Gracia T."/>
            <person name="Yu L."/>
            <person name="Choudhary J."/>
            <person name="Poulin G.B."/>
            <person name="McIntyre R.E."/>
            <person name="Winton D.J."/>
            <person name="March H.N."/>
            <person name="Arends M.J."/>
            <person name="Fraser A.G."/>
            <person name="Adams D.J."/>
        </authorList>
    </citation>
    <scope>FUNCTION</scope>
    <scope>INTERACTION WITH SALL4</scope>
    <scope>TISSUE SPECIFICITY</scope>
    <scope>DISRUPTION PHENOTYPE</scope>
</reference>
<evidence type="ECO:0000250" key="1">
    <source>
        <dbReference type="UniProtKB" id="Q9UHY1"/>
    </source>
</evidence>
<evidence type="ECO:0000255" key="2">
    <source>
        <dbReference type="PROSITE-ProRule" id="PRU00159"/>
    </source>
</evidence>
<evidence type="ECO:0000256" key="3">
    <source>
        <dbReference type="SAM" id="MobiDB-lite"/>
    </source>
</evidence>
<evidence type="ECO:0000269" key="4">
    <source>
    </source>
</evidence>
<evidence type="ECO:0000269" key="5">
    <source>
    </source>
</evidence>
<evidence type="ECO:0000305" key="6"/>
<evidence type="ECO:0000312" key="7">
    <source>
        <dbReference type="EMBL" id="AAH04756.1"/>
    </source>
</evidence>
<evidence type="ECO:0000312" key="8">
    <source>
        <dbReference type="EMBL" id="AAH18463.1"/>
    </source>
</evidence>
<evidence type="ECO:0000312" key="9">
    <source>
        <dbReference type="EMBL" id="AAK97260.1"/>
    </source>
</evidence>
<evidence type="ECO:0000312" key="10">
    <source>
        <dbReference type="EMBL" id="AAK97261.1"/>
    </source>
</evidence>
<evidence type="ECO:0007744" key="11">
    <source>
    </source>
</evidence>